<proteinExistence type="evidence at transcript level"/>
<evidence type="ECO:0000250" key="1">
    <source>
        <dbReference type="UniProtKB" id="P62825"/>
    </source>
</evidence>
<evidence type="ECO:0000250" key="2">
    <source>
        <dbReference type="UniProtKB" id="P62826"/>
    </source>
</evidence>
<evidence type="ECO:0000250" key="3">
    <source>
        <dbReference type="UniProtKB" id="P62827"/>
    </source>
</evidence>
<evidence type="ECO:0000255" key="4">
    <source>
        <dbReference type="PROSITE-ProRule" id="PRU00752"/>
    </source>
</evidence>
<evidence type="ECO:0000305" key="5"/>
<keyword id="KW-0007">Acetylation</keyword>
<keyword id="KW-0131">Cell cycle</keyword>
<keyword id="KW-0132">Cell division</keyword>
<keyword id="KW-0963">Cytoplasm</keyword>
<keyword id="KW-0342">GTP-binding</keyword>
<keyword id="KW-0378">Hydrolase</keyword>
<keyword id="KW-1017">Isopeptide bond</keyword>
<keyword id="KW-0460">Magnesium</keyword>
<keyword id="KW-0479">Metal-binding</keyword>
<keyword id="KW-0498">Mitosis</keyword>
<keyword id="KW-0547">Nucleotide-binding</keyword>
<keyword id="KW-0539">Nucleus</keyword>
<keyword id="KW-0597">Phosphoprotein</keyword>
<keyword id="KW-0653">Protein transport</keyword>
<keyword id="KW-1185">Reference proteome</keyword>
<keyword id="KW-0813">Transport</keyword>
<keyword id="KW-0832">Ubl conjugation</keyword>
<accession>Q5R556</accession>
<organism>
    <name type="scientific">Pongo abelii</name>
    <name type="common">Sumatran orangutan</name>
    <name type="synonym">Pongo pygmaeus abelii</name>
    <dbReference type="NCBI Taxonomy" id="9601"/>
    <lineage>
        <taxon>Eukaryota</taxon>
        <taxon>Metazoa</taxon>
        <taxon>Chordata</taxon>
        <taxon>Craniata</taxon>
        <taxon>Vertebrata</taxon>
        <taxon>Euteleostomi</taxon>
        <taxon>Mammalia</taxon>
        <taxon>Eutheria</taxon>
        <taxon>Euarchontoglires</taxon>
        <taxon>Primates</taxon>
        <taxon>Haplorrhini</taxon>
        <taxon>Catarrhini</taxon>
        <taxon>Hominidae</taxon>
        <taxon>Pongo</taxon>
    </lineage>
</organism>
<protein>
    <recommendedName>
        <fullName>GTP-binding nuclear protein Ran</fullName>
        <ecNumber evidence="2">3.6.5.-</ecNumber>
    </recommendedName>
    <alternativeName>
        <fullName>GTPase Ran</fullName>
    </alternativeName>
    <alternativeName>
        <fullName>Ras-related nuclear protein</fullName>
    </alternativeName>
</protein>
<feature type="initiator methionine" description="Removed" evidence="2">
    <location>
        <position position="1"/>
    </location>
</feature>
<feature type="chain" id="PRO_0000249774" description="GTP-binding nuclear protein Ran">
    <location>
        <begin position="2"/>
        <end position="216"/>
    </location>
</feature>
<feature type="domain" description="Small GTPase Ran-type" evidence="4">
    <location>
        <begin position="7"/>
        <end position="171"/>
    </location>
</feature>
<feature type="region of interest" description="Switch-I" evidence="4">
    <location>
        <begin position="37"/>
        <end position="45"/>
    </location>
</feature>
<feature type="region of interest" description="Switch-II" evidence="4">
    <location>
        <begin position="68"/>
        <end position="84"/>
    </location>
</feature>
<feature type="region of interest" description="Interaction with RANBP1" evidence="2">
    <location>
        <begin position="211"/>
        <end position="216"/>
    </location>
</feature>
<feature type="binding site" evidence="1">
    <location>
        <begin position="18"/>
        <end position="25"/>
    </location>
    <ligand>
        <name>GTP</name>
        <dbReference type="ChEBI" id="CHEBI:37565"/>
    </ligand>
</feature>
<feature type="binding site" evidence="1">
    <location>
        <begin position="36"/>
        <end position="42"/>
    </location>
    <ligand>
        <name>GTP</name>
        <dbReference type="ChEBI" id="CHEBI:37565"/>
    </ligand>
</feature>
<feature type="binding site" evidence="1">
    <location>
        <position position="68"/>
    </location>
    <ligand>
        <name>GTP</name>
        <dbReference type="ChEBI" id="CHEBI:37565"/>
    </ligand>
</feature>
<feature type="binding site" evidence="1">
    <location>
        <begin position="122"/>
        <end position="125"/>
    </location>
    <ligand>
        <name>GTP</name>
        <dbReference type="ChEBI" id="CHEBI:37565"/>
    </ligand>
</feature>
<feature type="binding site" evidence="1">
    <location>
        <begin position="150"/>
        <end position="152"/>
    </location>
    <ligand>
        <name>GTP</name>
        <dbReference type="ChEBI" id="CHEBI:37565"/>
    </ligand>
</feature>
<feature type="site" description="Essential for GTP hydrolysis" evidence="2">
    <location>
        <position position="69"/>
    </location>
</feature>
<feature type="modified residue" description="N-acetylalanine" evidence="2">
    <location>
        <position position="2"/>
    </location>
</feature>
<feature type="modified residue" description="Phosphothreonine" evidence="2">
    <location>
        <position position="24"/>
    </location>
</feature>
<feature type="modified residue" description="N6-acetyllysine" evidence="2">
    <location>
        <position position="37"/>
    </location>
</feature>
<feature type="modified residue" description="N6-acetyllysine" evidence="2">
    <location>
        <position position="60"/>
    </location>
</feature>
<feature type="modified residue" description="N6-acetyllysine; alternate" evidence="2">
    <location>
        <position position="71"/>
    </location>
</feature>
<feature type="modified residue" description="N6-acetyllysine" evidence="2">
    <location>
        <position position="99"/>
    </location>
</feature>
<feature type="modified residue" description="N6-acetyllysine" evidence="2">
    <location>
        <position position="134"/>
    </location>
</feature>
<feature type="modified residue" description="N6-acetyllysine; alternate" evidence="2">
    <location>
        <position position="159"/>
    </location>
</feature>
<feature type="modified residue" description="N6-succinyllysine; alternate" evidence="3">
    <location>
        <position position="159"/>
    </location>
</feature>
<feature type="cross-link" description="Glycyl lysine isopeptide (Lys-Gly) (interchain with G-Cter in SUMO2); alternate" evidence="2">
    <location>
        <position position="71"/>
    </location>
</feature>
<feature type="cross-link" description="Glycyl lysine isopeptide (Lys-Gly) (interchain with G-Cter in ubiquitin); alternate" evidence="2">
    <location>
        <position position="71"/>
    </location>
</feature>
<feature type="cross-link" description="Glycyl lysine isopeptide (Lys-Gly) (interchain with G-Cter in SUMO2)" evidence="2">
    <location>
        <position position="152"/>
    </location>
</feature>
<comment type="function">
    <text evidence="2">GTPase involved in nucleocytoplasmic transport, participating both to the import and the export from the nucleus of proteins and RNAs. Switches between a cytoplasmic GDP- and a nuclear GTP-bound state by nucleotide exchange and GTP hydrolysis. Nuclear import receptors such as importin beta bind their substrates only in the absence of GTP-bound RAN and release them upon direct interaction with GTP-bound RAN, while export receptors behave in the opposite way. Thereby, RAN controls cargo loading and release by transport receptors in the proper compartment and ensures the directionality of the transport. Interaction with RANBP1 induces a conformation change in the complex formed by XPO1 and RAN that triggers the release of the nuclear export signal of cargo proteins. RAN (GTP-bound form) triggers microtubule assembly at mitotic chromosomes and is required for normal mitotic spindle assembly and chromosome segregation. Required for normal progress through mitosis. The complex with BIRC5/survivin plays a role in mitotic spindle formation by serving as a physical scaffold to help deliver the RAN effector molecule TPX2 to microtubules. Acts as a negative regulator of the kinase activity of VRK1 and VRK2. Enhances AR-mediated transactivation.</text>
</comment>
<comment type="catalytic activity">
    <reaction evidence="2">
        <text>GTP + H2O = GDP + phosphate + H(+)</text>
        <dbReference type="Rhea" id="RHEA:19669"/>
        <dbReference type="ChEBI" id="CHEBI:15377"/>
        <dbReference type="ChEBI" id="CHEBI:15378"/>
        <dbReference type="ChEBI" id="CHEBI:37565"/>
        <dbReference type="ChEBI" id="CHEBI:43474"/>
        <dbReference type="ChEBI" id="CHEBI:58189"/>
    </reaction>
    <physiologicalReaction direction="left-to-right" evidence="2">
        <dbReference type="Rhea" id="RHEA:19670"/>
    </physiologicalReaction>
</comment>
<comment type="cofactor">
    <cofactor evidence="2">
        <name>Mg(2+)</name>
        <dbReference type="ChEBI" id="CHEBI:18420"/>
    </cofactor>
    <text evidence="2">Mg(2+) interacts primarily with the phosphate groups of the bound guanine nucleotide.</text>
</comment>
<comment type="subunit">
    <text evidence="1 2 3">Monomer. Interacts with RANGAP1, which promotes RAN-mediated GTP hydrolysis. Interacts with KPNB1. Interaction with KPNB1 inhibits RANGAP1-mediated stimulation of GTPase activity. Interacts with RCC1 which promotes the exchange of RAN-bound GDP by GTP. Interaction with KPNB1 inhibits RCC1-mediated exchange of RAN-bound GDP by GTP. Interacts (GTP-bound form) with TNPO1; the interaction is direct. Interacts (GTP-bound form) with TNPO3; the interaction is direct. Interacts with KPNB1 and with TNPO1; both inhibit RAN GTPase activity. Interacts (via C-terminus) with RANBP1, which alleviates the inhibition of RAN GTPase activity. Interacts with RANGRF, which promotes the release of bound guanine nucleotide. RANGRF and RCC1 compete for an overlapping binding site on RAN. Identified in a complex with KPNA2 and CSE1L; interaction with RANBP1 mediates dissociation of RAN from this complex. Interaction with both RANBP1 and KPNA2 promotes dissociation of the complex between RAN and KPNB1. Identified in a complex composed of RAN, RANGAP1 and RANBP1. Identified in a complex that contains TNPO1, RAN and RANBP1. Identified in a nuclear export complex with XPO1. Found in a nuclear export complex with RANBP3 and XPO1. Interacts with RANBP2/NUP358. Interaction with RANBP1 or RANBP2 induces a conformation change in the complex formed by XPO1 and RAN that triggers the release of the nuclear export signal of cargo proteins. Component of a nuclear export receptor complex composed of KPNB1, RAN, SNUPN and XPO1 (By similarity). Found in a nuclear export complex with RAN, XPO5 and pre-miRNA (By similarity). Interacts (GTP-bound form) with XPO5 (By similarity). Part of a complex consisting of RANBP9, RAN, DYRK1B and COPS5. Interacts with RANBP9 and RANBP10. Interacts in its GTP-bound form with BIRC5/survivin at S and M phases of the cell cycle. Interacts with TERT; the interaction requires hydrogen peroxide-mediated phosphorylation of TERT and transports TERT to the nucleus. Interacts with MAD2L2. Interacts with VRK1 and VRK3. Interacts with VRK2 (By similarity). Interacts with NEMP1 and KPNB1 (By similarity). Interacts (GDP-bound form) with NUTF2; regulates RAN nuclear import. Interacts with CAPG; mediates CAPG nuclear import. Interacts with NUP153. Interacts with the AR N-terminal poly-Gln region; the interaction with AR is inversely correlated with the poly-Gln length (By similarity). Interacts with MYCBP2, which promotes RAN-mediated GTP hydrolysis (By similarity). Interacts with EPG5 (By similarity).</text>
</comment>
<comment type="subcellular location">
    <subcellularLocation>
        <location evidence="2">Nucleus</location>
    </subcellularLocation>
    <subcellularLocation>
        <location evidence="2">Nucleus envelope</location>
    </subcellularLocation>
    <subcellularLocation>
        <location evidence="2">Cytoplasm</location>
        <location evidence="2">Cytosol</location>
    </subcellularLocation>
    <subcellularLocation>
        <location evidence="2">Cytoplasm</location>
    </subcellularLocation>
    <subcellularLocation>
        <location evidence="2">Melanosome</location>
    </subcellularLocation>
    <text evidence="2">Predominantly nuclear during interphase. Becomes dispersed throughout the cytoplasm during mitosis (By similarity). Identified by mass spectrometry in melanosome fractions from stage I to stage IV (By similarity).</text>
</comment>
<comment type="PTM">
    <text evidence="2">Acetylation by KAT5 at Lys-134 is increased during mitosis, impairs RANGRF binding and enhances RCC1 binding. Acetylation at Lys-37 enhances the association with nuclear export components. Deacetylation of Lys-37 by SIRT7 regulates the nuclear export of NF-kappa-B subunit RELA/p65.</text>
</comment>
<comment type="similarity">
    <text evidence="4 5">Belongs to the small GTPase superfamily. Ran family.</text>
</comment>
<reference key="1">
    <citation type="submission" date="2004-11" db="EMBL/GenBank/DDBJ databases">
        <authorList>
            <consortium name="The German cDNA consortium"/>
        </authorList>
    </citation>
    <scope>NUCLEOTIDE SEQUENCE [LARGE SCALE MRNA]</scope>
    <source>
        <tissue>Brain cortex</tissue>
    </source>
</reference>
<dbReference type="EC" id="3.6.5.-" evidence="2"/>
<dbReference type="EMBL" id="CR861015">
    <property type="protein sequence ID" value="CAH93110.1"/>
    <property type="molecule type" value="mRNA"/>
</dbReference>
<dbReference type="EMBL" id="CR926082">
    <property type="protein sequence ID" value="CAI29709.1"/>
    <property type="molecule type" value="mRNA"/>
</dbReference>
<dbReference type="RefSeq" id="NP_001129282.1">
    <property type="nucleotide sequence ID" value="NM_001135810.1"/>
</dbReference>
<dbReference type="SMR" id="Q5R556"/>
<dbReference type="FunCoup" id="Q5R556">
    <property type="interactions" value="3318"/>
</dbReference>
<dbReference type="STRING" id="9601.ENSPPYP00000005841"/>
<dbReference type="GeneID" id="100173539"/>
<dbReference type="KEGG" id="pon:100173539"/>
<dbReference type="CTD" id="5901"/>
<dbReference type="eggNOG" id="KOG0096">
    <property type="taxonomic scope" value="Eukaryota"/>
</dbReference>
<dbReference type="HOGENOM" id="CLU_041217_13_0_1"/>
<dbReference type="InParanoid" id="Q5R556"/>
<dbReference type="OrthoDB" id="48625at2759"/>
<dbReference type="Proteomes" id="UP000001595">
    <property type="component" value="Unplaced"/>
</dbReference>
<dbReference type="GO" id="GO:0005829">
    <property type="term" value="C:cytosol"/>
    <property type="evidence" value="ECO:0007669"/>
    <property type="project" value="UniProtKB-SubCell"/>
</dbReference>
<dbReference type="GO" id="GO:0042470">
    <property type="term" value="C:melanosome"/>
    <property type="evidence" value="ECO:0007669"/>
    <property type="project" value="UniProtKB-SubCell"/>
</dbReference>
<dbReference type="GO" id="GO:0005635">
    <property type="term" value="C:nuclear envelope"/>
    <property type="evidence" value="ECO:0007669"/>
    <property type="project" value="UniProtKB-SubCell"/>
</dbReference>
<dbReference type="GO" id="GO:0005634">
    <property type="term" value="C:nucleus"/>
    <property type="evidence" value="ECO:0000250"/>
    <property type="project" value="UniProtKB"/>
</dbReference>
<dbReference type="GO" id="GO:0005525">
    <property type="term" value="F:GTP binding"/>
    <property type="evidence" value="ECO:0000250"/>
    <property type="project" value="UniProtKB"/>
</dbReference>
<dbReference type="GO" id="GO:0003924">
    <property type="term" value="F:GTPase activity"/>
    <property type="evidence" value="ECO:0000250"/>
    <property type="project" value="UniProtKB"/>
</dbReference>
<dbReference type="GO" id="GO:0000287">
    <property type="term" value="F:magnesium ion binding"/>
    <property type="evidence" value="ECO:0000250"/>
    <property type="project" value="UniProtKB"/>
</dbReference>
<dbReference type="GO" id="GO:0051301">
    <property type="term" value="P:cell division"/>
    <property type="evidence" value="ECO:0007669"/>
    <property type="project" value="UniProtKB-KW"/>
</dbReference>
<dbReference type="GO" id="GO:0046039">
    <property type="term" value="P:GTP metabolic process"/>
    <property type="evidence" value="ECO:0000250"/>
    <property type="project" value="UniProtKB"/>
</dbReference>
<dbReference type="GO" id="GO:0000070">
    <property type="term" value="P:mitotic sister chromatid segregation"/>
    <property type="evidence" value="ECO:0000250"/>
    <property type="project" value="UniProtKB"/>
</dbReference>
<dbReference type="GO" id="GO:0006611">
    <property type="term" value="P:protein export from nucleus"/>
    <property type="evidence" value="ECO:0000250"/>
    <property type="project" value="UniProtKB"/>
</dbReference>
<dbReference type="GO" id="GO:0006606">
    <property type="term" value="P:protein import into nucleus"/>
    <property type="evidence" value="ECO:0000250"/>
    <property type="project" value="UniProtKB"/>
</dbReference>
<dbReference type="GO" id="GO:0000054">
    <property type="term" value="P:ribosomal subunit export from nucleus"/>
    <property type="evidence" value="ECO:0007669"/>
    <property type="project" value="TreeGrafter"/>
</dbReference>
<dbReference type="GO" id="GO:0061015">
    <property type="term" value="P:snRNA import into nucleus"/>
    <property type="evidence" value="ECO:0000250"/>
    <property type="project" value="UniProtKB"/>
</dbReference>
<dbReference type="CDD" id="cd00877">
    <property type="entry name" value="Ran"/>
    <property type="match status" value="1"/>
</dbReference>
<dbReference type="FunFam" id="3.40.50.300:FF:000131">
    <property type="entry name" value="GTP-binding nuclear protein Ran"/>
    <property type="match status" value="1"/>
</dbReference>
<dbReference type="Gene3D" id="3.40.50.300">
    <property type="entry name" value="P-loop containing nucleotide triphosphate hydrolases"/>
    <property type="match status" value="1"/>
</dbReference>
<dbReference type="InterPro" id="IPR027417">
    <property type="entry name" value="P-loop_NTPase"/>
</dbReference>
<dbReference type="InterPro" id="IPR002041">
    <property type="entry name" value="Ran_GTPase"/>
</dbReference>
<dbReference type="InterPro" id="IPR005225">
    <property type="entry name" value="Small_GTP-bd"/>
</dbReference>
<dbReference type="InterPro" id="IPR001806">
    <property type="entry name" value="Small_GTPase"/>
</dbReference>
<dbReference type="NCBIfam" id="TIGR00231">
    <property type="entry name" value="small_GTP"/>
    <property type="match status" value="1"/>
</dbReference>
<dbReference type="PANTHER" id="PTHR24071:SF0">
    <property type="entry name" value="GTP-BINDING NUCLEAR PROTEIN RAN"/>
    <property type="match status" value="1"/>
</dbReference>
<dbReference type="PANTHER" id="PTHR24071">
    <property type="entry name" value="RAN GTPASE"/>
    <property type="match status" value="1"/>
</dbReference>
<dbReference type="Pfam" id="PF00071">
    <property type="entry name" value="Ras"/>
    <property type="match status" value="1"/>
</dbReference>
<dbReference type="PRINTS" id="PR00627">
    <property type="entry name" value="GTPRANTC4"/>
</dbReference>
<dbReference type="SMART" id="SM00175">
    <property type="entry name" value="RAB"/>
    <property type="match status" value="1"/>
</dbReference>
<dbReference type="SMART" id="SM00176">
    <property type="entry name" value="RAN"/>
    <property type="match status" value="1"/>
</dbReference>
<dbReference type="SMART" id="SM00173">
    <property type="entry name" value="RAS"/>
    <property type="match status" value="1"/>
</dbReference>
<dbReference type="SMART" id="SM00174">
    <property type="entry name" value="RHO"/>
    <property type="match status" value="1"/>
</dbReference>
<dbReference type="SUPFAM" id="SSF52540">
    <property type="entry name" value="P-loop containing nucleoside triphosphate hydrolases"/>
    <property type="match status" value="1"/>
</dbReference>
<dbReference type="PROSITE" id="PS51418">
    <property type="entry name" value="RAN"/>
    <property type="match status" value="1"/>
</dbReference>
<sequence length="216" mass="24423">MAAQGEPQVQFKLVLVGDGGTGKTTFVKRHLTGEFEKKYVATLGVEVHPLVFHTNRGPIKFNVWDTAGQEKFGGLRDGYYIQAQCAIIMFDVTSRVTYKNVPNWHRDLVRVCENIPIVLCGNKVDIKDRKVKAKSIVFHRKKNLQYYDISAKSNYNFEKPFLWLARKLIGDPNLEFVAMPALAPPEVVMDPALAAQYEHDLEVAQTTALPDEDDDL</sequence>
<name>RAN_PONAB</name>
<gene>
    <name type="primary">RAN</name>
</gene>